<comment type="function">
    <text evidence="1">Responsible for the release of ribosomes from messenger RNA at the termination of protein biosynthesis. May increase the efficiency of translation by recycling ribosomes from one round of translation to another.</text>
</comment>
<comment type="subcellular location">
    <subcellularLocation>
        <location evidence="1">Cytoplasm</location>
    </subcellularLocation>
</comment>
<comment type="similarity">
    <text evidence="1">Belongs to the RRF family.</text>
</comment>
<dbReference type="EMBL" id="AP010918">
    <property type="protein sequence ID" value="BAH27176.1"/>
    <property type="molecule type" value="Genomic_DNA"/>
</dbReference>
<dbReference type="RefSeq" id="WP_011799300.1">
    <property type="nucleotide sequence ID" value="NZ_CP014566.1"/>
</dbReference>
<dbReference type="SMR" id="C1AFZ7"/>
<dbReference type="KEGG" id="mbt:JTY_2898"/>
<dbReference type="HOGENOM" id="CLU_073981_2_0_11"/>
<dbReference type="GO" id="GO:0005737">
    <property type="term" value="C:cytoplasm"/>
    <property type="evidence" value="ECO:0007669"/>
    <property type="project" value="UniProtKB-SubCell"/>
</dbReference>
<dbReference type="GO" id="GO:0043023">
    <property type="term" value="F:ribosomal large subunit binding"/>
    <property type="evidence" value="ECO:0007669"/>
    <property type="project" value="TreeGrafter"/>
</dbReference>
<dbReference type="GO" id="GO:0006415">
    <property type="term" value="P:translational termination"/>
    <property type="evidence" value="ECO:0007669"/>
    <property type="project" value="UniProtKB-UniRule"/>
</dbReference>
<dbReference type="CDD" id="cd00520">
    <property type="entry name" value="RRF"/>
    <property type="match status" value="1"/>
</dbReference>
<dbReference type="FunFam" id="1.10.132.20:FF:000001">
    <property type="entry name" value="Ribosome-recycling factor"/>
    <property type="match status" value="1"/>
</dbReference>
<dbReference type="FunFam" id="3.30.1360.40:FF:000001">
    <property type="entry name" value="Ribosome-recycling factor"/>
    <property type="match status" value="1"/>
</dbReference>
<dbReference type="Gene3D" id="3.30.1360.40">
    <property type="match status" value="1"/>
</dbReference>
<dbReference type="Gene3D" id="1.10.132.20">
    <property type="entry name" value="Ribosome-recycling factor"/>
    <property type="match status" value="1"/>
</dbReference>
<dbReference type="HAMAP" id="MF_00040">
    <property type="entry name" value="RRF"/>
    <property type="match status" value="1"/>
</dbReference>
<dbReference type="InterPro" id="IPR002661">
    <property type="entry name" value="Ribosome_recyc_fac"/>
</dbReference>
<dbReference type="InterPro" id="IPR023584">
    <property type="entry name" value="Ribosome_recyc_fac_dom"/>
</dbReference>
<dbReference type="InterPro" id="IPR036191">
    <property type="entry name" value="RRF_sf"/>
</dbReference>
<dbReference type="NCBIfam" id="TIGR00496">
    <property type="entry name" value="frr"/>
    <property type="match status" value="1"/>
</dbReference>
<dbReference type="PANTHER" id="PTHR20982:SF3">
    <property type="entry name" value="MITOCHONDRIAL RIBOSOME RECYCLING FACTOR PSEUDO 1"/>
    <property type="match status" value="1"/>
</dbReference>
<dbReference type="PANTHER" id="PTHR20982">
    <property type="entry name" value="RIBOSOME RECYCLING FACTOR"/>
    <property type="match status" value="1"/>
</dbReference>
<dbReference type="Pfam" id="PF01765">
    <property type="entry name" value="RRF"/>
    <property type="match status" value="1"/>
</dbReference>
<dbReference type="SUPFAM" id="SSF55194">
    <property type="entry name" value="Ribosome recycling factor, RRF"/>
    <property type="match status" value="1"/>
</dbReference>
<gene>
    <name evidence="1" type="primary">frr</name>
    <name type="ordered locus">JTY_2898</name>
</gene>
<name>RRF_MYCBT</name>
<sequence length="185" mass="20844">MIDEALFDAEEKMEKAVAVARDDLSTIRTGRANPGMFSRITIDYYGAATLITQLASINVPEARLVVIKPYEANQLRAIETAIRNSDLGVNPTNDGALIRVAVPQLTEERRRELVKQAKHKGEEAKVSVRNIRRKAMEELHRIRKEGEAGEDEVGRAEKDLDKTTHQYVTQIDELVKHKEGELLEV</sequence>
<accession>C1AFZ7</accession>
<organism>
    <name type="scientific">Mycobacterium bovis (strain BCG / Tokyo 172 / ATCC 35737 / TMC 1019)</name>
    <dbReference type="NCBI Taxonomy" id="561275"/>
    <lineage>
        <taxon>Bacteria</taxon>
        <taxon>Bacillati</taxon>
        <taxon>Actinomycetota</taxon>
        <taxon>Actinomycetes</taxon>
        <taxon>Mycobacteriales</taxon>
        <taxon>Mycobacteriaceae</taxon>
        <taxon>Mycobacterium</taxon>
        <taxon>Mycobacterium tuberculosis complex</taxon>
    </lineage>
</organism>
<feature type="chain" id="PRO_1000194941" description="Ribosome-recycling factor">
    <location>
        <begin position="1"/>
        <end position="185"/>
    </location>
</feature>
<reference key="1">
    <citation type="journal article" date="2009" name="Vaccine">
        <title>Whole genome sequence analysis of Mycobacterium bovis bacillus Calmette-Guerin (BCG) Tokyo 172: a comparative study of BCG vaccine substrains.</title>
        <authorList>
            <person name="Seki M."/>
            <person name="Honda I."/>
            <person name="Fujita I."/>
            <person name="Yano I."/>
            <person name="Yamamoto S."/>
            <person name="Koyama A."/>
        </authorList>
    </citation>
    <scope>NUCLEOTIDE SEQUENCE [LARGE SCALE GENOMIC DNA]</scope>
    <source>
        <strain>BCG / Tokyo 172 / ATCC 35737 / TMC 1019</strain>
    </source>
</reference>
<proteinExistence type="inferred from homology"/>
<evidence type="ECO:0000255" key="1">
    <source>
        <dbReference type="HAMAP-Rule" id="MF_00040"/>
    </source>
</evidence>
<protein>
    <recommendedName>
        <fullName evidence="1">Ribosome-recycling factor</fullName>
        <shortName evidence="1">RRF</shortName>
    </recommendedName>
    <alternativeName>
        <fullName evidence="1">Ribosome-releasing factor</fullName>
    </alternativeName>
</protein>
<keyword id="KW-0963">Cytoplasm</keyword>
<keyword id="KW-0648">Protein biosynthesis</keyword>